<accession>Q6D1G3</accession>
<organism>
    <name type="scientific">Pectobacterium atrosepticum (strain SCRI 1043 / ATCC BAA-672)</name>
    <name type="common">Erwinia carotovora subsp. atroseptica</name>
    <dbReference type="NCBI Taxonomy" id="218491"/>
    <lineage>
        <taxon>Bacteria</taxon>
        <taxon>Pseudomonadati</taxon>
        <taxon>Pseudomonadota</taxon>
        <taxon>Gammaproteobacteria</taxon>
        <taxon>Enterobacterales</taxon>
        <taxon>Pectobacteriaceae</taxon>
        <taxon>Pectobacterium</taxon>
    </lineage>
</organism>
<gene>
    <name evidence="1" type="primary">mtnD2</name>
    <name type="ordered locus">ECA3485</name>
</gene>
<evidence type="ECO:0000255" key="1">
    <source>
        <dbReference type="HAMAP-Rule" id="MF_01682"/>
    </source>
</evidence>
<name>MTND2_PECAS</name>
<proteinExistence type="inferred from homology"/>
<dbReference type="EC" id="1.13.11.54" evidence="1"/>
<dbReference type="EC" id="1.13.11.53" evidence="1"/>
<dbReference type="EMBL" id="BX950851">
    <property type="protein sequence ID" value="CAG76383.1"/>
    <property type="molecule type" value="Genomic_DNA"/>
</dbReference>
<dbReference type="RefSeq" id="WP_011094990.1">
    <property type="nucleotide sequence ID" value="NC_004547.2"/>
</dbReference>
<dbReference type="SMR" id="Q6D1G3"/>
<dbReference type="STRING" id="218491.ECA3485"/>
<dbReference type="KEGG" id="eca:ECA3485"/>
<dbReference type="eggNOG" id="COG1791">
    <property type="taxonomic scope" value="Bacteria"/>
</dbReference>
<dbReference type="HOGENOM" id="CLU_125400_0_0_6"/>
<dbReference type="OrthoDB" id="9795636at2"/>
<dbReference type="UniPathway" id="UPA00904">
    <property type="reaction ID" value="UER00878"/>
</dbReference>
<dbReference type="Proteomes" id="UP000007966">
    <property type="component" value="Chromosome"/>
</dbReference>
<dbReference type="GO" id="GO:0010308">
    <property type="term" value="F:acireductone dioxygenase (Ni2+-requiring) activity"/>
    <property type="evidence" value="ECO:0007669"/>
    <property type="project" value="UniProtKB-UniRule"/>
</dbReference>
<dbReference type="GO" id="GO:0010309">
    <property type="term" value="F:acireductone dioxygenase [iron(II)-requiring] activity"/>
    <property type="evidence" value="ECO:0007669"/>
    <property type="project" value="UniProtKB-UniRule"/>
</dbReference>
<dbReference type="GO" id="GO:0005506">
    <property type="term" value="F:iron ion binding"/>
    <property type="evidence" value="ECO:0007669"/>
    <property type="project" value="UniProtKB-UniRule"/>
</dbReference>
<dbReference type="GO" id="GO:0016151">
    <property type="term" value="F:nickel cation binding"/>
    <property type="evidence" value="ECO:0007669"/>
    <property type="project" value="UniProtKB-UniRule"/>
</dbReference>
<dbReference type="GO" id="GO:0019509">
    <property type="term" value="P:L-methionine salvage from methylthioadenosine"/>
    <property type="evidence" value="ECO:0007669"/>
    <property type="project" value="UniProtKB-UniRule"/>
</dbReference>
<dbReference type="GO" id="GO:0019284">
    <property type="term" value="P:L-methionine salvage from S-adenosylmethionine"/>
    <property type="evidence" value="ECO:0007669"/>
    <property type="project" value="InterPro"/>
</dbReference>
<dbReference type="CDD" id="cd02232">
    <property type="entry name" value="cupin_ARD"/>
    <property type="match status" value="1"/>
</dbReference>
<dbReference type="Gene3D" id="2.60.120.10">
    <property type="entry name" value="Jelly Rolls"/>
    <property type="match status" value="1"/>
</dbReference>
<dbReference type="HAMAP" id="MF_01682">
    <property type="entry name" value="Salvage_MtnD"/>
    <property type="match status" value="1"/>
</dbReference>
<dbReference type="InterPro" id="IPR004313">
    <property type="entry name" value="ARD"/>
</dbReference>
<dbReference type="InterPro" id="IPR023956">
    <property type="entry name" value="ARD_bac"/>
</dbReference>
<dbReference type="InterPro" id="IPR014710">
    <property type="entry name" value="RmlC-like_jellyroll"/>
</dbReference>
<dbReference type="InterPro" id="IPR011051">
    <property type="entry name" value="RmlC_Cupin_sf"/>
</dbReference>
<dbReference type="PANTHER" id="PTHR23418">
    <property type="entry name" value="ACIREDUCTONE DIOXYGENASE"/>
    <property type="match status" value="1"/>
</dbReference>
<dbReference type="PANTHER" id="PTHR23418:SF0">
    <property type="entry name" value="ACIREDUCTONE DIOXYGENASE"/>
    <property type="match status" value="1"/>
</dbReference>
<dbReference type="Pfam" id="PF03079">
    <property type="entry name" value="ARD"/>
    <property type="match status" value="1"/>
</dbReference>
<dbReference type="SUPFAM" id="SSF51182">
    <property type="entry name" value="RmlC-like cupins"/>
    <property type="match status" value="1"/>
</dbReference>
<keyword id="KW-0028">Amino-acid biosynthesis</keyword>
<keyword id="KW-0223">Dioxygenase</keyword>
<keyword id="KW-0408">Iron</keyword>
<keyword id="KW-0479">Metal-binding</keyword>
<keyword id="KW-0486">Methionine biosynthesis</keyword>
<keyword id="KW-0533">Nickel</keyword>
<keyword id="KW-0560">Oxidoreductase</keyword>
<keyword id="KW-1185">Reference proteome</keyword>
<reference key="1">
    <citation type="journal article" date="2004" name="Proc. Natl. Acad. Sci. U.S.A.">
        <title>Genome sequence of the enterobacterial phytopathogen Erwinia carotovora subsp. atroseptica and characterization of virulence factors.</title>
        <authorList>
            <person name="Bell K.S."/>
            <person name="Sebaihia M."/>
            <person name="Pritchard L."/>
            <person name="Holden M.T.G."/>
            <person name="Hyman L.J."/>
            <person name="Holeva M.C."/>
            <person name="Thomson N.R."/>
            <person name="Bentley S.D."/>
            <person name="Churcher L.J.C."/>
            <person name="Mungall K."/>
            <person name="Atkin R."/>
            <person name="Bason N."/>
            <person name="Brooks K."/>
            <person name="Chillingworth T."/>
            <person name="Clark K."/>
            <person name="Doggett J."/>
            <person name="Fraser A."/>
            <person name="Hance Z."/>
            <person name="Hauser H."/>
            <person name="Jagels K."/>
            <person name="Moule S."/>
            <person name="Norbertczak H."/>
            <person name="Ormond D."/>
            <person name="Price C."/>
            <person name="Quail M.A."/>
            <person name="Sanders M."/>
            <person name="Walker D."/>
            <person name="Whitehead S."/>
            <person name="Salmond G.P.C."/>
            <person name="Birch P.R.J."/>
            <person name="Parkhill J."/>
            <person name="Toth I.K."/>
        </authorList>
    </citation>
    <scope>NUCLEOTIDE SEQUENCE [LARGE SCALE GENOMIC DNA]</scope>
    <source>
        <strain>SCRI 1043 / ATCC BAA-672</strain>
    </source>
</reference>
<sequence>MSGLTIFSDSDASQPIWQSQDADAIQKQLNDIGVRFERWEASQKLSDAPSSEEVLAVYQHEIDKLVAEKGYQSWDVISMRSDNPQCAELRTKFLSEHIHHEDEVRFFVEGAGLFCLHLNGKIYQILCEKNDLLSVPAGTAHWFDMGPEPHFTAIRLFDNPEGWIAHFTGDKIADVYPKLEC</sequence>
<protein>
    <recommendedName>
        <fullName evidence="1">Acireductone dioxygenase 2</fullName>
    </recommendedName>
    <alternativeName>
        <fullName evidence="1">1,2-dihydroxy-3-keto-5-methylthiopentene dioxygenase 2</fullName>
        <shortName evidence="1">DHK-MTPene dioxygenase 2</shortName>
    </alternativeName>
    <alternativeName>
        <fullName evidence="1">Acireductone dioxygenase (Fe(2+)-requiring) 2</fullName>
        <shortName evidence="1">ARD' 2</shortName>
        <shortName evidence="1">Fe-ARD 2</shortName>
        <ecNumber evidence="1">1.13.11.54</ecNumber>
    </alternativeName>
    <alternativeName>
        <fullName evidence="1">Acireductone dioxygenase (Ni(2+)-requiring) 2</fullName>
        <shortName evidence="1">ARD 2</shortName>
        <shortName evidence="1">Ni-ARD 2</shortName>
        <ecNumber evidence="1">1.13.11.53</ecNumber>
    </alternativeName>
</protein>
<comment type="function">
    <text evidence="1">Catalyzes 2 different reactions between oxygen and the acireductone 1,2-dihydroxy-3-keto-5-methylthiopentene (DHK-MTPene) depending upon the metal bound in the active site. Fe-containing acireductone dioxygenase (Fe-ARD) produces formate and 2-keto-4-methylthiobutyrate (KMTB), the alpha-ketoacid precursor of methionine in the methionine recycle pathway. Ni-containing acireductone dioxygenase (Ni-ARD) produces methylthiopropionate, carbon monoxide and formate, and does not lie on the methionine recycle pathway.</text>
</comment>
<comment type="catalytic activity">
    <reaction evidence="1">
        <text>1,2-dihydroxy-5-(methylsulfanyl)pent-1-en-3-one + O2 = 3-(methylsulfanyl)propanoate + CO + formate + 2 H(+)</text>
        <dbReference type="Rhea" id="RHEA:14161"/>
        <dbReference type="ChEBI" id="CHEBI:15378"/>
        <dbReference type="ChEBI" id="CHEBI:15379"/>
        <dbReference type="ChEBI" id="CHEBI:15740"/>
        <dbReference type="ChEBI" id="CHEBI:17245"/>
        <dbReference type="ChEBI" id="CHEBI:49016"/>
        <dbReference type="ChEBI" id="CHEBI:49252"/>
        <dbReference type="EC" id="1.13.11.53"/>
    </reaction>
</comment>
<comment type="catalytic activity">
    <reaction evidence="1">
        <text>1,2-dihydroxy-5-(methylsulfanyl)pent-1-en-3-one + O2 = 4-methylsulfanyl-2-oxobutanoate + formate + 2 H(+)</text>
        <dbReference type="Rhea" id="RHEA:24504"/>
        <dbReference type="ChEBI" id="CHEBI:15378"/>
        <dbReference type="ChEBI" id="CHEBI:15379"/>
        <dbReference type="ChEBI" id="CHEBI:15740"/>
        <dbReference type="ChEBI" id="CHEBI:16723"/>
        <dbReference type="ChEBI" id="CHEBI:49252"/>
        <dbReference type="EC" id="1.13.11.54"/>
    </reaction>
</comment>
<comment type="cofactor">
    <cofactor evidence="1">
        <name>Fe(2+)</name>
        <dbReference type="ChEBI" id="CHEBI:29033"/>
    </cofactor>
    <text evidence="1">Binds 1 Fe(2+) cation per monomer.</text>
</comment>
<comment type="cofactor">
    <cofactor evidence="1">
        <name>Ni(2+)</name>
        <dbReference type="ChEBI" id="CHEBI:49786"/>
    </cofactor>
    <text evidence="1">Binds 1 nickel ion per monomer.</text>
</comment>
<comment type="pathway">
    <text evidence="1">Amino-acid biosynthesis; L-methionine biosynthesis via salvage pathway; L-methionine from S-methyl-5-thio-alpha-D-ribose 1-phosphate: step 5/6.</text>
</comment>
<comment type="subunit">
    <text evidence="1">Monomer.</text>
</comment>
<comment type="similarity">
    <text evidence="1">Belongs to the acireductone dioxygenase (ARD) family.</text>
</comment>
<feature type="chain" id="PRO_0000359189" description="Acireductone dioxygenase 2">
    <location>
        <begin position="1"/>
        <end position="181"/>
    </location>
</feature>
<feature type="binding site" evidence="1">
    <location>
        <position position="97"/>
    </location>
    <ligand>
        <name>Fe(2+)</name>
        <dbReference type="ChEBI" id="CHEBI:29033"/>
    </ligand>
</feature>
<feature type="binding site" evidence="1">
    <location>
        <position position="97"/>
    </location>
    <ligand>
        <name>Ni(2+)</name>
        <dbReference type="ChEBI" id="CHEBI:49786"/>
    </ligand>
</feature>
<feature type="binding site" evidence="1">
    <location>
        <position position="99"/>
    </location>
    <ligand>
        <name>Fe(2+)</name>
        <dbReference type="ChEBI" id="CHEBI:29033"/>
    </ligand>
</feature>
<feature type="binding site" evidence="1">
    <location>
        <position position="99"/>
    </location>
    <ligand>
        <name>Ni(2+)</name>
        <dbReference type="ChEBI" id="CHEBI:49786"/>
    </ligand>
</feature>
<feature type="binding site" evidence="1">
    <location>
        <position position="103"/>
    </location>
    <ligand>
        <name>Fe(2+)</name>
        <dbReference type="ChEBI" id="CHEBI:29033"/>
    </ligand>
</feature>
<feature type="binding site" evidence="1">
    <location>
        <position position="103"/>
    </location>
    <ligand>
        <name>Ni(2+)</name>
        <dbReference type="ChEBI" id="CHEBI:49786"/>
    </ligand>
</feature>
<feature type="binding site" evidence="1">
    <location>
        <position position="141"/>
    </location>
    <ligand>
        <name>Fe(2+)</name>
        <dbReference type="ChEBI" id="CHEBI:29033"/>
    </ligand>
</feature>
<feature type="binding site" evidence="1">
    <location>
        <position position="141"/>
    </location>
    <ligand>
        <name>Ni(2+)</name>
        <dbReference type="ChEBI" id="CHEBI:49786"/>
    </ligand>
</feature>
<feature type="site" description="May play a role in metal incorporation in vivo" evidence="1">
    <location>
        <position position="96"/>
    </location>
</feature>
<feature type="site" description="May play a role in transmitting local conformational changes" evidence="1">
    <location>
        <position position="102"/>
    </location>
</feature>
<feature type="site" description="Important to generate the dianion" evidence="1">
    <location>
        <position position="105"/>
    </location>
</feature>